<feature type="chain" id="PRO_1000197038" description="tRNA (guanine(26)-N(2))-dimethyltransferase">
    <location>
        <begin position="1"/>
        <end position="370"/>
    </location>
</feature>
<feature type="domain" description="Trm1 methyltransferase" evidence="1">
    <location>
        <begin position="4"/>
        <end position="368"/>
    </location>
</feature>
<feature type="binding site" evidence="1">
    <location>
        <position position="41"/>
    </location>
    <ligand>
        <name>S-adenosyl-L-methionine</name>
        <dbReference type="ChEBI" id="CHEBI:59789"/>
    </ligand>
</feature>
<feature type="binding site" evidence="1">
    <location>
        <position position="66"/>
    </location>
    <ligand>
        <name>S-adenosyl-L-methionine</name>
        <dbReference type="ChEBI" id="CHEBI:59789"/>
    </ligand>
</feature>
<feature type="binding site" evidence="1">
    <location>
        <position position="82"/>
    </location>
    <ligand>
        <name>S-adenosyl-L-methionine</name>
        <dbReference type="ChEBI" id="CHEBI:59789"/>
    </ligand>
</feature>
<feature type="binding site" evidence="1">
    <location>
        <position position="108"/>
    </location>
    <ligand>
        <name>S-adenosyl-L-methionine</name>
        <dbReference type="ChEBI" id="CHEBI:59789"/>
    </ligand>
</feature>
<feature type="binding site" evidence="1">
    <location>
        <position position="109"/>
    </location>
    <ligand>
        <name>S-adenosyl-L-methionine</name>
        <dbReference type="ChEBI" id="CHEBI:59789"/>
    </ligand>
</feature>
<feature type="binding site" evidence="1">
    <location>
        <position position="237"/>
    </location>
    <ligand>
        <name>Zn(2+)</name>
        <dbReference type="ChEBI" id="CHEBI:29105"/>
    </ligand>
</feature>
<feature type="binding site" evidence="1">
    <location>
        <position position="240"/>
    </location>
    <ligand>
        <name>Zn(2+)</name>
        <dbReference type="ChEBI" id="CHEBI:29105"/>
    </ligand>
</feature>
<feature type="binding site" evidence="1">
    <location>
        <position position="256"/>
    </location>
    <ligand>
        <name>Zn(2+)</name>
        <dbReference type="ChEBI" id="CHEBI:29105"/>
    </ligand>
</feature>
<feature type="binding site" evidence="1">
    <location>
        <position position="259"/>
    </location>
    <ligand>
        <name>Zn(2+)</name>
        <dbReference type="ChEBI" id="CHEBI:29105"/>
    </ligand>
</feature>
<comment type="function">
    <text evidence="1">Dimethylates a single guanine residue at position 26 of a number of tRNAs using S-adenosyl-L-methionine as donor of the methyl groups.</text>
</comment>
<comment type="catalytic activity">
    <reaction evidence="1">
        <text>guanosine(26) in tRNA + 2 S-adenosyl-L-methionine = N(2)-dimethylguanosine(26) in tRNA + 2 S-adenosyl-L-homocysteine + 2 H(+)</text>
        <dbReference type="Rhea" id="RHEA:43140"/>
        <dbReference type="Rhea" id="RHEA-COMP:10359"/>
        <dbReference type="Rhea" id="RHEA-COMP:10360"/>
        <dbReference type="ChEBI" id="CHEBI:15378"/>
        <dbReference type="ChEBI" id="CHEBI:57856"/>
        <dbReference type="ChEBI" id="CHEBI:59789"/>
        <dbReference type="ChEBI" id="CHEBI:74269"/>
        <dbReference type="ChEBI" id="CHEBI:74513"/>
        <dbReference type="EC" id="2.1.1.216"/>
    </reaction>
</comment>
<comment type="similarity">
    <text evidence="1">Belongs to the class I-like SAM-binding methyltransferase superfamily. Trm1 family.</text>
</comment>
<evidence type="ECO:0000255" key="1">
    <source>
        <dbReference type="HAMAP-Rule" id="MF_00290"/>
    </source>
</evidence>
<protein>
    <recommendedName>
        <fullName evidence="1">tRNA (guanine(26)-N(2))-dimethyltransferase</fullName>
        <ecNumber evidence="1">2.1.1.216</ecNumber>
    </recommendedName>
    <alternativeName>
        <fullName evidence="1">tRNA 2,2-dimethylguanosine-26 methyltransferase</fullName>
    </alternativeName>
    <alternativeName>
        <fullName evidence="1">tRNA(guanine-26,N(2)-N(2)) methyltransferase</fullName>
    </alternativeName>
    <alternativeName>
        <fullName evidence="1">tRNA(m(2,2)G26)dimethyltransferase</fullName>
    </alternativeName>
</protein>
<keyword id="KW-0479">Metal-binding</keyword>
<keyword id="KW-0489">Methyltransferase</keyword>
<keyword id="KW-1185">Reference proteome</keyword>
<keyword id="KW-0694">RNA-binding</keyword>
<keyword id="KW-0949">S-adenosyl-L-methionine</keyword>
<keyword id="KW-0808">Transferase</keyword>
<keyword id="KW-0819">tRNA processing</keyword>
<keyword id="KW-0820">tRNA-binding</keyword>
<keyword id="KW-0862">Zinc</keyword>
<organism>
    <name type="scientific">Methanospirillum hungatei JF-1 (strain ATCC 27890 / DSM 864 / NBRC 100397 / JF-1)</name>
    <dbReference type="NCBI Taxonomy" id="323259"/>
    <lineage>
        <taxon>Archaea</taxon>
        <taxon>Methanobacteriati</taxon>
        <taxon>Methanobacteriota</taxon>
        <taxon>Stenosarchaea group</taxon>
        <taxon>Methanomicrobia</taxon>
        <taxon>Methanomicrobiales</taxon>
        <taxon>Methanospirillaceae</taxon>
        <taxon>Methanospirillum</taxon>
    </lineage>
</organism>
<proteinExistence type="inferred from homology"/>
<gene>
    <name evidence="1" type="primary">trm1</name>
    <name type="ordered locus">Mhun_0626</name>
</gene>
<reference key="1">
    <citation type="journal article" date="2016" name="Stand. Genomic Sci.">
        <title>Complete genome sequence of Methanospirillum hungatei type strain JF1.</title>
        <authorList>
            <person name="Gunsalus R.P."/>
            <person name="Cook L.E."/>
            <person name="Crable B."/>
            <person name="Rohlin L."/>
            <person name="McDonald E."/>
            <person name="Mouttaki H."/>
            <person name="Sieber J.R."/>
            <person name="Poweleit N."/>
            <person name="Zhou H."/>
            <person name="Lapidus A.L."/>
            <person name="Daligault H.E."/>
            <person name="Land M."/>
            <person name="Gilna P."/>
            <person name="Ivanova N."/>
            <person name="Kyrpides N."/>
            <person name="Culley D.E."/>
            <person name="McInerney M.J."/>
        </authorList>
    </citation>
    <scope>NUCLEOTIDE SEQUENCE [LARGE SCALE GENOMIC DNA]</scope>
    <source>
        <strain>ATCC 27890 / DSM 864 / NBRC 100397 / JF-1</strain>
    </source>
</reference>
<name>TRM1_METHJ</name>
<sequence>MDLTWVTEGRTTIAVPCQNPDVPFPPGTAPVFYNSRMALNRDSTVLVVRQTHPHSYLDAMAASGIRGCRVGYETGVPVTFNDRDQLAIDLITHNVQSLGIKADITCRDANSLMSDEKFGFVDLDPFGTPAPFIDAAIRSSGKYLGVTATDTAPLCGAHLKAGIRRYMARPLNTEYHTEVGLRILLGNVARHAAVYDKGITPLFCYAHEHFVRLHLQLKSSASAADKSIARLGYIHQCPKCPYRLEEQKFFPGIHTCPLCGASLTPTGPLWTGSTHDPNILAGMIEDAETFIAGDPSGLLKLLALCRDEPDISFSYDYHKLGKFYRLSPGPIDVLLNRLRDKGYRAGRVHYSGYGIKTDAPLEEIRDCISS</sequence>
<accession>Q2FN43</accession>
<dbReference type="EC" id="2.1.1.216" evidence="1"/>
<dbReference type="EMBL" id="CP000254">
    <property type="protein sequence ID" value="ABD40382.1"/>
    <property type="molecule type" value="Genomic_DNA"/>
</dbReference>
<dbReference type="RefSeq" id="WP_011447667.1">
    <property type="nucleotide sequence ID" value="NC_007796.1"/>
</dbReference>
<dbReference type="SMR" id="Q2FN43"/>
<dbReference type="FunCoup" id="Q2FN43">
    <property type="interactions" value="190"/>
</dbReference>
<dbReference type="STRING" id="323259.Mhun_0626"/>
<dbReference type="EnsemblBacteria" id="ABD40382">
    <property type="protein sequence ID" value="ABD40382"/>
    <property type="gene ID" value="Mhun_0626"/>
</dbReference>
<dbReference type="GeneID" id="3922940"/>
<dbReference type="KEGG" id="mhu:Mhun_0626"/>
<dbReference type="eggNOG" id="arCOG01219">
    <property type="taxonomic scope" value="Archaea"/>
</dbReference>
<dbReference type="HOGENOM" id="CLU_010862_5_1_2"/>
<dbReference type="InParanoid" id="Q2FN43"/>
<dbReference type="OrthoDB" id="372177at2157"/>
<dbReference type="Proteomes" id="UP000001941">
    <property type="component" value="Chromosome"/>
</dbReference>
<dbReference type="GO" id="GO:0160104">
    <property type="term" value="F:tRNA (guanine(26)-N2)-dimethyltransferase activity"/>
    <property type="evidence" value="ECO:0007669"/>
    <property type="project" value="UniProtKB-UniRule"/>
</dbReference>
<dbReference type="GO" id="GO:0000049">
    <property type="term" value="F:tRNA binding"/>
    <property type="evidence" value="ECO:0007669"/>
    <property type="project" value="UniProtKB-KW"/>
</dbReference>
<dbReference type="GO" id="GO:0002940">
    <property type="term" value="P:tRNA N2-guanine methylation"/>
    <property type="evidence" value="ECO:0007669"/>
    <property type="project" value="TreeGrafter"/>
</dbReference>
<dbReference type="Gene3D" id="3.30.56.70">
    <property type="entry name" value="N2,N2-dimethylguanosine tRNA methyltransferase, C-terminal domain"/>
    <property type="match status" value="1"/>
</dbReference>
<dbReference type="Gene3D" id="3.40.50.150">
    <property type="entry name" value="Vaccinia Virus protein VP39"/>
    <property type="match status" value="1"/>
</dbReference>
<dbReference type="HAMAP" id="MF_00290">
    <property type="entry name" value="tRNA_dimethyltr_TRM1"/>
    <property type="match status" value="1"/>
</dbReference>
<dbReference type="InterPro" id="IPR029063">
    <property type="entry name" value="SAM-dependent_MTases_sf"/>
</dbReference>
<dbReference type="InterPro" id="IPR002905">
    <property type="entry name" value="Trm1"/>
</dbReference>
<dbReference type="InterPro" id="IPR022923">
    <property type="entry name" value="TRM1_arc_bac"/>
</dbReference>
<dbReference type="InterPro" id="IPR042296">
    <property type="entry name" value="tRNA_met_Trm1_C"/>
</dbReference>
<dbReference type="NCBIfam" id="TIGR00308">
    <property type="entry name" value="TRM1"/>
    <property type="match status" value="1"/>
</dbReference>
<dbReference type="PANTHER" id="PTHR10631">
    <property type="entry name" value="N 2 ,N 2 -DIMETHYLGUANOSINE TRNA METHYLTRANSFERASE"/>
    <property type="match status" value="1"/>
</dbReference>
<dbReference type="PANTHER" id="PTHR10631:SF3">
    <property type="entry name" value="TRNA (GUANINE(26)-N(2))-DIMETHYLTRANSFERASE"/>
    <property type="match status" value="1"/>
</dbReference>
<dbReference type="Pfam" id="PF02005">
    <property type="entry name" value="TRM"/>
    <property type="match status" value="1"/>
</dbReference>
<dbReference type="SUPFAM" id="SSF53335">
    <property type="entry name" value="S-adenosyl-L-methionine-dependent methyltransferases"/>
    <property type="match status" value="1"/>
</dbReference>
<dbReference type="PROSITE" id="PS51626">
    <property type="entry name" value="SAM_MT_TRM1"/>
    <property type="match status" value="1"/>
</dbReference>